<comment type="function">
    <text evidence="1">Poorly processive, error-prone DNA polymerase involved in untargeted mutagenesis. Copies undamaged DNA at stalled replication forks, which arise in vivo from mismatched or misaligned primer ends. These misaligned primers can be extended by PolIV. Exhibits no 3'-5' exonuclease (proofreading) activity. May be involved in translesional synthesis, in conjunction with the beta clamp from PolIII.</text>
</comment>
<comment type="catalytic activity">
    <reaction evidence="1">
        <text>DNA(n) + a 2'-deoxyribonucleoside 5'-triphosphate = DNA(n+1) + diphosphate</text>
        <dbReference type="Rhea" id="RHEA:22508"/>
        <dbReference type="Rhea" id="RHEA-COMP:17339"/>
        <dbReference type="Rhea" id="RHEA-COMP:17340"/>
        <dbReference type="ChEBI" id="CHEBI:33019"/>
        <dbReference type="ChEBI" id="CHEBI:61560"/>
        <dbReference type="ChEBI" id="CHEBI:173112"/>
        <dbReference type="EC" id="2.7.7.7"/>
    </reaction>
</comment>
<comment type="cofactor">
    <cofactor evidence="1">
        <name>Mg(2+)</name>
        <dbReference type="ChEBI" id="CHEBI:18420"/>
    </cofactor>
    <text evidence="1">Binds 2 magnesium ions per subunit.</text>
</comment>
<comment type="subunit">
    <text evidence="1">Monomer.</text>
</comment>
<comment type="subcellular location">
    <subcellularLocation>
        <location evidence="1">Cytoplasm</location>
    </subcellularLocation>
</comment>
<comment type="similarity">
    <text evidence="1">Belongs to the DNA polymerase type-Y family.</text>
</comment>
<feature type="chain" id="PRO_1000084911" description="DNA polymerase IV">
    <location>
        <begin position="1"/>
        <end position="349"/>
    </location>
</feature>
<feature type="domain" description="UmuC" evidence="1">
    <location>
        <begin position="4"/>
        <end position="185"/>
    </location>
</feature>
<feature type="active site" evidence="1">
    <location>
        <position position="104"/>
    </location>
</feature>
<feature type="binding site" evidence="1">
    <location>
        <position position="8"/>
    </location>
    <ligand>
        <name>Mg(2+)</name>
        <dbReference type="ChEBI" id="CHEBI:18420"/>
    </ligand>
</feature>
<feature type="binding site" evidence="1">
    <location>
        <position position="103"/>
    </location>
    <ligand>
        <name>Mg(2+)</name>
        <dbReference type="ChEBI" id="CHEBI:18420"/>
    </ligand>
</feature>
<feature type="site" description="Substrate discrimination" evidence="1">
    <location>
        <position position="13"/>
    </location>
</feature>
<reference key="1">
    <citation type="submission" date="2007-06" db="EMBL/GenBank/DDBJ databases">
        <authorList>
            <person name="Dodson R.J."/>
            <person name="Harkins D."/>
            <person name="Paulsen I.T."/>
        </authorList>
    </citation>
    <scope>NUCLEOTIDE SEQUENCE [LARGE SCALE GENOMIC DNA]</scope>
    <source>
        <strain>DSM 24068 / PA7</strain>
    </source>
</reference>
<gene>
    <name evidence="1" type="primary">dinB</name>
    <name type="ordered locus">PSPA7_4587</name>
</gene>
<sequence length="349" mass="38869">MRKIIHIDCDCFYAALEMRDDPSLRGKALAVGGSPDKRGVVATCSYEARAYGVRSAMAMRTALKLCPDLLVVRPRFDVYRAVSKQIHAIFRDYTELIEPLSLDEAYLDVSASPHFAGSATRIAQDIRRRVAEELRITVSAGVAPNKFLAKIASDWRKPDGLFVITPEQVDGFVAELPVAKLHGVGKVTAERLARMGIRTCADLRQGSKLSLVREFGSFGERLWSLAHGVDERPVEVDSRRQSVSVECTFDRDLPDLAACLEELPALLEELDGRLLRLDGSYRPDKPFVKLKFHDFTQTTLEQAGAGRDLDSYRQMLGQAFARGSRPVRLIGVGVRLLDLQGAHEQLRLF</sequence>
<accession>A6VA50</accession>
<proteinExistence type="inferred from homology"/>
<keyword id="KW-0963">Cytoplasm</keyword>
<keyword id="KW-0227">DNA damage</keyword>
<keyword id="KW-0234">DNA repair</keyword>
<keyword id="KW-0235">DNA replication</keyword>
<keyword id="KW-0238">DNA-binding</keyword>
<keyword id="KW-0239">DNA-directed DNA polymerase</keyword>
<keyword id="KW-0460">Magnesium</keyword>
<keyword id="KW-0479">Metal-binding</keyword>
<keyword id="KW-0515">Mutator protein</keyword>
<keyword id="KW-0548">Nucleotidyltransferase</keyword>
<keyword id="KW-0808">Transferase</keyword>
<protein>
    <recommendedName>
        <fullName evidence="1">DNA polymerase IV</fullName>
        <shortName evidence="1">Pol IV</shortName>
        <ecNumber evidence="1">2.7.7.7</ecNumber>
    </recommendedName>
</protein>
<dbReference type="EC" id="2.7.7.7" evidence="1"/>
<dbReference type="EMBL" id="CP000744">
    <property type="protein sequence ID" value="ABR86896.1"/>
    <property type="molecule type" value="Genomic_DNA"/>
</dbReference>
<dbReference type="RefSeq" id="WP_003156435.1">
    <property type="nucleotide sequence ID" value="NC_009656.1"/>
</dbReference>
<dbReference type="SMR" id="A6VA50"/>
<dbReference type="KEGG" id="pap:PSPA7_4587"/>
<dbReference type="HOGENOM" id="CLU_012348_1_2_6"/>
<dbReference type="Proteomes" id="UP000001582">
    <property type="component" value="Chromosome"/>
</dbReference>
<dbReference type="GO" id="GO:0005829">
    <property type="term" value="C:cytosol"/>
    <property type="evidence" value="ECO:0007669"/>
    <property type="project" value="TreeGrafter"/>
</dbReference>
<dbReference type="GO" id="GO:0003684">
    <property type="term" value="F:damaged DNA binding"/>
    <property type="evidence" value="ECO:0007669"/>
    <property type="project" value="InterPro"/>
</dbReference>
<dbReference type="GO" id="GO:0003887">
    <property type="term" value="F:DNA-directed DNA polymerase activity"/>
    <property type="evidence" value="ECO:0007669"/>
    <property type="project" value="UniProtKB-UniRule"/>
</dbReference>
<dbReference type="GO" id="GO:0000287">
    <property type="term" value="F:magnesium ion binding"/>
    <property type="evidence" value="ECO:0007669"/>
    <property type="project" value="UniProtKB-UniRule"/>
</dbReference>
<dbReference type="GO" id="GO:0006261">
    <property type="term" value="P:DNA-templated DNA replication"/>
    <property type="evidence" value="ECO:0007669"/>
    <property type="project" value="UniProtKB-UniRule"/>
</dbReference>
<dbReference type="GO" id="GO:0042276">
    <property type="term" value="P:error-prone translesion synthesis"/>
    <property type="evidence" value="ECO:0007669"/>
    <property type="project" value="TreeGrafter"/>
</dbReference>
<dbReference type="GO" id="GO:0009432">
    <property type="term" value="P:SOS response"/>
    <property type="evidence" value="ECO:0007669"/>
    <property type="project" value="TreeGrafter"/>
</dbReference>
<dbReference type="CDD" id="cd03586">
    <property type="entry name" value="PolY_Pol_IV_kappa"/>
    <property type="match status" value="1"/>
</dbReference>
<dbReference type="FunFam" id="1.10.150.20:FF:000019">
    <property type="entry name" value="DNA polymerase IV"/>
    <property type="match status" value="1"/>
</dbReference>
<dbReference type="FunFam" id="3.30.70.270:FF:000002">
    <property type="entry name" value="DNA polymerase IV"/>
    <property type="match status" value="1"/>
</dbReference>
<dbReference type="FunFam" id="3.40.1170.60:FF:000001">
    <property type="entry name" value="DNA polymerase IV"/>
    <property type="match status" value="1"/>
</dbReference>
<dbReference type="Gene3D" id="3.30.70.270">
    <property type="match status" value="1"/>
</dbReference>
<dbReference type="Gene3D" id="3.40.1170.60">
    <property type="match status" value="1"/>
</dbReference>
<dbReference type="Gene3D" id="1.10.150.20">
    <property type="entry name" value="5' to 3' exonuclease, C-terminal subdomain"/>
    <property type="match status" value="1"/>
</dbReference>
<dbReference type="Gene3D" id="3.30.1490.100">
    <property type="entry name" value="DNA polymerase, Y-family, little finger domain"/>
    <property type="match status" value="1"/>
</dbReference>
<dbReference type="HAMAP" id="MF_01113">
    <property type="entry name" value="DNApol_IV"/>
    <property type="match status" value="1"/>
</dbReference>
<dbReference type="InterPro" id="IPR043502">
    <property type="entry name" value="DNA/RNA_pol_sf"/>
</dbReference>
<dbReference type="InterPro" id="IPR036775">
    <property type="entry name" value="DNA_pol_Y-fam_lit_finger_sf"/>
</dbReference>
<dbReference type="InterPro" id="IPR017961">
    <property type="entry name" value="DNA_pol_Y-fam_little_finger"/>
</dbReference>
<dbReference type="InterPro" id="IPR050116">
    <property type="entry name" value="DNA_polymerase-Y"/>
</dbReference>
<dbReference type="InterPro" id="IPR022880">
    <property type="entry name" value="DNApol_IV"/>
</dbReference>
<dbReference type="InterPro" id="IPR053848">
    <property type="entry name" value="IMS_HHH_1"/>
</dbReference>
<dbReference type="InterPro" id="IPR043128">
    <property type="entry name" value="Rev_trsase/Diguanyl_cyclase"/>
</dbReference>
<dbReference type="InterPro" id="IPR001126">
    <property type="entry name" value="UmuC"/>
</dbReference>
<dbReference type="NCBIfam" id="NF002677">
    <property type="entry name" value="PRK02406.1"/>
    <property type="match status" value="1"/>
</dbReference>
<dbReference type="PANTHER" id="PTHR11076:SF33">
    <property type="entry name" value="DNA POLYMERASE KAPPA"/>
    <property type="match status" value="1"/>
</dbReference>
<dbReference type="PANTHER" id="PTHR11076">
    <property type="entry name" value="DNA REPAIR POLYMERASE UMUC / TRANSFERASE FAMILY MEMBER"/>
    <property type="match status" value="1"/>
</dbReference>
<dbReference type="Pfam" id="PF00817">
    <property type="entry name" value="IMS"/>
    <property type="match status" value="1"/>
</dbReference>
<dbReference type="Pfam" id="PF11799">
    <property type="entry name" value="IMS_C"/>
    <property type="match status" value="1"/>
</dbReference>
<dbReference type="Pfam" id="PF21999">
    <property type="entry name" value="IMS_HHH_1"/>
    <property type="match status" value="1"/>
</dbReference>
<dbReference type="SUPFAM" id="SSF56672">
    <property type="entry name" value="DNA/RNA polymerases"/>
    <property type="match status" value="1"/>
</dbReference>
<dbReference type="SUPFAM" id="SSF100879">
    <property type="entry name" value="Lesion bypass DNA polymerase (Y-family), little finger domain"/>
    <property type="match status" value="1"/>
</dbReference>
<dbReference type="PROSITE" id="PS50173">
    <property type="entry name" value="UMUC"/>
    <property type="match status" value="1"/>
</dbReference>
<evidence type="ECO:0000255" key="1">
    <source>
        <dbReference type="HAMAP-Rule" id="MF_01113"/>
    </source>
</evidence>
<name>DPO4_PSEP7</name>
<organism>
    <name type="scientific">Pseudomonas paraeruginosa (strain DSM 24068 / PA7)</name>
    <name type="common">Pseudomonas aeruginosa (strain PA7)</name>
    <dbReference type="NCBI Taxonomy" id="381754"/>
    <lineage>
        <taxon>Bacteria</taxon>
        <taxon>Pseudomonadati</taxon>
        <taxon>Pseudomonadota</taxon>
        <taxon>Gammaproteobacteria</taxon>
        <taxon>Pseudomonadales</taxon>
        <taxon>Pseudomonadaceae</taxon>
        <taxon>Pseudomonas</taxon>
        <taxon>Pseudomonas paraeruginosa</taxon>
    </lineage>
</organism>